<proteinExistence type="inferred from homology"/>
<evidence type="ECO:0000255" key="1">
    <source>
        <dbReference type="HAMAP-Rule" id="MF_00444"/>
    </source>
</evidence>
<dbReference type="EC" id="3.4.21.92" evidence="1"/>
<dbReference type="EMBL" id="CP000931">
    <property type="protein sequence ID" value="ABZ77321.1"/>
    <property type="molecule type" value="Genomic_DNA"/>
</dbReference>
<dbReference type="RefSeq" id="WP_012277849.1">
    <property type="nucleotide sequence ID" value="NC_010334.1"/>
</dbReference>
<dbReference type="SMR" id="B0TLU9"/>
<dbReference type="STRING" id="458817.Shal_2768"/>
<dbReference type="MEROPS" id="S14.001"/>
<dbReference type="KEGG" id="shl:Shal_2768"/>
<dbReference type="eggNOG" id="COG0740">
    <property type="taxonomic scope" value="Bacteria"/>
</dbReference>
<dbReference type="HOGENOM" id="CLU_058707_3_2_6"/>
<dbReference type="OrthoDB" id="9802800at2"/>
<dbReference type="Proteomes" id="UP000001317">
    <property type="component" value="Chromosome"/>
</dbReference>
<dbReference type="GO" id="GO:0005737">
    <property type="term" value="C:cytoplasm"/>
    <property type="evidence" value="ECO:0007669"/>
    <property type="project" value="UniProtKB-SubCell"/>
</dbReference>
<dbReference type="GO" id="GO:0009368">
    <property type="term" value="C:endopeptidase Clp complex"/>
    <property type="evidence" value="ECO:0007669"/>
    <property type="project" value="TreeGrafter"/>
</dbReference>
<dbReference type="GO" id="GO:0004176">
    <property type="term" value="F:ATP-dependent peptidase activity"/>
    <property type="evidence" value="ECO:0007669"/>
    <property type="project" value="InterPro"/>
</dbReference>
<dbReference type="GO" id="GO:0051117">
    <property type="term" value="F:ATPase binding"/>
    <property type="evidence" value="ECO:0007669"/>
    <property type="project" value="TreeGrafter"/>
</dbReference>
<dbReference type="GO" id="GO:0004252">
    <property type="term" value="F:serine-type endopeptidase activity"/>
    <property type="evidence" value="ECO:0007669"/>
    <property type="project" value="UniProtKB-UniRule"/>
</dbReference>
<dbReference type="GO" id="GO:0006515">
    <property type="term" value="P:protein quality control for misfolded or incompletely synthesized proteins"/>
    <property type="evidence" value="ECO:0007669"/>
    <property type="project" value="TreeGrafter"/>
</dbReference>
<dbReference type="CDD" id="cd07017">
    <property type="entry name" value="S14_ClpP_2"/>
    <property type="match status" value="1"/>
</dbReference>
<dbReference type="FunFam" id="3.90.226.10:FF:000001">
    <property type="entry name" value="ATP-dependent Clp protease proteolytic subunit"/>
    <property type="match status" value="1"/>
</dbReference>
<dbReference type="Gene3D" id="3.90.226.10">
    <property type="entry name" value="2-enoyl-CoA Hydratase, Chain A, domain 1"/>
    <property type="match status" value="1"/>
</dbReference>
<dbReference type="HAMAP" id="MF_00444">
    <property type="entry name" value="ClpP"/>
    <property type="match status" value="1"/>
</dbReference>
<dbReference type="InterPro" id="IPR001907">
    <property type="entry name" value="ClpP"/>
</dbReference>
<dbReference type="InterPro" id="IPR029045">
    <property type="entry name" value="ClpP/crotonase-like_dom_sf"/>
</dbReference>
<dbReference type="InterPro" id="IPR023562">
    <property type="entry name" value="ClpP/TepA"/>
</dbReference>
<dbReference type="InterPro" id="IPR033135">
    <property type="entry name" value="ClpP_His_AS"/>
</dbReference>
<dbReference type="InterPro" id="IPR018215">
    <property type="entry name" value="ClpP_Ser_AS"/>
</dbReference>
<dbReference type="NCBIfam" id="TIGR00493">
    <property type="entry name" value="clpP"/>
    <property type="match status" value="1"/>
</dbReference>
<dbReference type="NCBIfam" id="NF001368">
    <property type="entry name" value="PRK00277.1"/>
    <property type="match status" value="1"/>
</dbReference>
<dbReference type="NCBIfam" id="NF009205">
    <property type="entry name" value="PRK12553.1"/>
    <property type="match status" value="1"/>
</dbReference>
<dbReference type="PANTHER" id="PTHR10381">
    <property type="entry name" value="ATP-DEPENDENT CLP PROTEASE PROTEOLYTIC SUBUNIT"/>
    <property type="match status" value="1"/>
</dbReference>
<dbReference type="PANTHER" id="PTHR10381:SF70">
    <property type="entry name" value="ATP-DEPENDENT CLP PROTEASE PROTEOLYTIC SUBUNIT"/>
    <property type="match status" value="1"/>
</dbReference>
<dbReference type="Pfam" id="PF00574">
    <property type="entry name" value="CLP_protease"/>
    <property type="match status" value="1"/>
</dbReference>
<dbReference type="PRINTS" id="PR00127">
    <property type="entry name" value="CLPPROTEASEP"/>
</dbReference>
<dbReference type="SUPFAM" id="SSF52096">
    <property type="entry name" value="ClpP/crotonase"/>
    <property type="match status" value="1"/>
</dbReference>
<dbReference type="PROSITE" id="PS00382">
    <property type="entry name" value="CLP_PROTEASE_HIS"/>
    <property type="match status" value="1"/>
</dbReference>
<dbReference type="PROSITE" id="PS00381">
    <property type="entry name" value="CLP_PROTEASE_SER"/>
    <property type="match status" value="1"/>
</dbReference>
<protein>
    <recommendedName>
        <fullName evidence="1">ATP-dependent Clp protease proteolytic subunit</fullName>
        <ecNumber evidence="1">3.4.21.92</ecNumber>
    </recommendedName>
    <alternativeName>
        <fullName evidence="1">Endopeptidase Clp</fullName>
    </alternativeName>
</protein>
<sequence>MHKAPESVLNALVPMVVEQTAKGERSYDIYSRLLKERVIFLVGQVEEHMANLIVAQLLFLESESPDKDIYLYINSPGGSVTAGMAIYDTMQFIKPNVSTVCIGQAASMGAFLLAGGAEGKRHCLPNSRVMIHQPLGGFQGQASDIAIHAQEILGIKNKLNTMLAEHTGQPLEVIERDTDRDNFMSATEAAEYGLVDSVIAKRS</sequence>
<feature type="chain" id="PRO_1000080899" description="ATP-dependent Clp protease proteolytic subunit">
    <location>
        <begin position="1"/>
        <end position="203"/>
    </location>
</feature>
<feature type="active site" description="Nucleophile" evidence="1">
    <location>
        <position position="107"/>
    </location>
</feature>
<feature type="active site" evidence="1">
    <location>
        <position position="132"/>
    </location>
</feature>
<reference key="1">
    <citation type="submission" date="2008-01" db="EMBL/GenBank/DDBJ databases">
        <title>Complete sequence of Shewanella halifaxensis HAW-EB4.</title>
        <authorList>
            <consortium name="US DOE Joint Genome Institute"/>
            <person name="Copeland A."/>
            <person name="Lucas S."/>
            <person name="Lapidus A."/>
            <person name="Glavina del Rio T."/>
            <person name="Dalin E."/>
            <person name="Tice H."/>
            <person name="Bruce D."/>
            <person name="Goodwin L."/>
            <person name="Pitluck S."/>
            <person name="Sims D."/>
            <person name="Brettin T."/>
            <person name="Detter J.C."/>
            <person name="Han C."/>
            <person name="Kuske C.R."/>
            <person name="Schmutz J."/>
            <person name="Larimer F."/>
            <person name="Land M."/>
            <person name="Hauser L."/>
            <person name="Kyrpides N."/>
            <person name="Kim E."/>
            <person name="Zhao J.-S."/>
            <person name="Richardson P."/>
        </authorList>
    </citation>
    <scope>NUCLEOTIDE SEQUENCE [LARGE SCALE GENOMIC DNA]</scope>
    <source>
        <strain>HAW-EB4</strain>
    </source>
</reference>
<keyword id="KW-0963">Cytoplasm</keyword>
<keyword id="KW-0378">Hydrolase</keyword>
<keyword id="KW-0645">Protease</keyword>
<keyword id="KW-0720">Serine protease</keyword>
<name>CLPP_SHEHH</name>
<gene>
    <name evidence="1" type="primary">clpP</name>
    <name type="ordered locus">Shal_2768</name>
</gene>
<accession>B0TLU9</accession>
<comment type="function">
    <text evidence="1">Cleaves peptides in various proteins in a process that requires ATP hydrolysis. Has a chymotrypsin-like activity. Plays a major role in the degradation of misfolded proteins.</text>
</comment>
<comment type="catalytic activity">
    <reaction evidence="1">
        <text>Hydrolysis of proteins to small peptides in the presence of ATP and magnesium. alpha-casein is the usual test substrate. In the absence of ATP, only oligopeptides shorter than five residues are hydrolyzed (such as succinyl-Leu-Tyr-|-NHMec, and Leu-Tyr-Leu-|-Tyr-Trp, in which cleavage of the -Tyr-|-Leu- and -Tyr-|-Trp bonds also occurs).</text>
        <dbReference type="EC" id="3.4.21.92"/>
    </reaction>
</comment>
<comment type="subunit">
    <text evidence="1">Fourteen ClpP subunits assemble into 2 heptameric rings which stack back to back to give a disk-like structure with a central cavity, resembling the structure of eukaryotic proteasomes.</text>
</comment>
<comment type="subcellular location">
    <subcellularLocation>
        <location evidence="1">Cytoplasm</location>
    </subcellularLocation>
</comment>
<comment type="similarity">
    <text evidence="1">Belongs to the peptidase S14 family.</text>
</comment>
<organism>
    <name type="scientific">Shewanella halifaxensis (strain HAW-EB4)</name>
    <dbReference type="NCBI Taxonomy" id="458817"/>
    <lineage>
        <taxon>Bacteria</taxon>
        <taxon>Pseudomonadati</taxon>
        <taxon>Pseudomonadota</taxon>
        <taxon>Gammaproteobacteria</taxon>
        <taxon>Alteromonadales</taxon>
        <taxon>Shewanellaceae</taxon>
        <taxon>Shewanella</taxon>
    </lineage>
</organism>